<accession>A6VHR1</accession>
<dbReference type="EMBL" id="CP000745">
    <property type="protein sequence ID" value="ABR65987.1"/>
    <property type="molecule type" value="Genomic_DNA"/>
</dbReference>
<dbReference type="SMR" id="A6VHR1"/>
<dbReference type="STRING" id="426368.MmarC7_0920"/>
<dbReference type="KEGG" id="mmz:MmarC7_0920"/>
<dbReference type="eggNOG" id="arCOG01306">
    <property type="taxonomic scope" value="Archaea"/>
</dbReference>
<dbReference type="HOGENOM" id="CLU_000688_2_0_2"/>
<dbReference type="OrthoDB" id="77269at2157"/>
<dbReference type="GO" id="GO:0005737">
    <property type="term" value="C:cytoplasm"/>
    <property type="evidence" value="ECO:0007669"/>
    <property type="project" value="UniProtKB-SubCell"/>
</dbReference>
<dbReference type="GO" id="GO:0022623">
    <property type="term" value="C:proteasome-activating nucleotidase complex"/>
    <property type="evidence" value="ECO:0007669"/>
    <property type="project" value="UniProtKB-UniRule"/>
</dbReference>
<dbReference type="GO" id="GO:0005524">
    <property type="term" value="F:ATP binding"/>
    <property type="evidence" value="ECO:0007669"/>
    <property type="project" value="UniProtKB-UniRule"/>
</dbReference>
<dbReference type="GO" id="GO:0016887">
    <property type="term" value="F:ATP hydrolysis activity"/>
    <property type="evidence" value="ECO:0007669"/>
    <property type="project" value="UniProtKB-UniRule"/>
</dbReference>
<dbReference type="GO" id="GO:0010498">
    <property type="term" value="P:proteasomal protein catabolic process"/>
    <property type="evidence" value="ECO:0007669"/>
    <property type="project" value="UniProtKB-UniRule"/>
</dbReference>
<dbReference type="GO" id="GO:0043335">
    <property type="term" value="P:protein unfolding"/>
    <property type="evidence" value="ECO:0007669"/>
    <property type="project" value="UniProtKB-UniRule"/>
</dbReference>
<dbReference type="CDD" id="cd19502">
    <property type="entry name" value="RecA-like_PAN_like"/>
    <property type="match status" value="1"/>
</dbReference>
<dbReference type="FunFam" id="3.40.50.300:FF:000033">
    <property type="entry name" value="26S protease regulatory subunit 6B"/>
    <property type="match status" value="1"/>
</dbReference>
<dbReference type="FunFam" id="1.10.8.60:FF:000006">
    <property type="entry name" value="26S protease regulatory subunit 8"/>
    <property type="match status" value="1"/>
</dbReference>
<dbReference type="Gene3D" id="1.10.8.60">
    <property type="match status" value="1"/>
</dbReference>
<dbReference type="Gene3D" id="2.40.50.140">
    <property type="entry name" value="Nucleic acid-binding proteins"/>
    <property type="match status" value="1"/>
</dbReference>
<dbReference type="Gene3D" id="3.40.50.300">
    <property type="entry name" value="P-loop containing nucleotide triphosphate hydrolases"/>
    <property type="match status" value="1"/>
</dbReference>
<dbReference type="HAMAP" id="MF_00553">
    <property type="entry name" value="PAN"/>
    <property type="match status" value="1"/>
</dbReference>
<dbReference type="InterPro" id="IPR050221">
    <property type="entry name" value="26S_Proteasome_ATPase"/>
</dbReference>
<dbReference type="InterPro" id="IPR003593">
    <property type="entry name" value="AAA+_ATPase"/>
</dbReference>
<dbReference type="InterPro" id="IPR041569">
    <property type="entry name" value="AAA_lid_3"/>
</dbReference>
<dbReference type="InterPro" id="IPR003959">
    <property type="entry name" value="ATPase_AAA_core"/>
</dbReference>
<dbReference type="InterPro" id="IPR003960">
    <property type="entry name" value="ATPase_AAA_CS"/>
</dbReference>
<dbReference type="InterPro" id="IPR012340">
    <property type="entry name" value="NA-bd_OB-fold"/>
</dbReference>
<dbReference type="InterPro" id="IPR023501">
    <property type="entry name" value="Nucleotidase_PAN"/>
</dbReference>
<dbReference type="InterPro" id="IPR027417">
    <property type="entry name" value="P-loop_NTPase"/>
</dbReference>
<dbReference type="InterPro" id="IPR032501">
    <property type="entry name" value="Prot_ATP_ID_OB_2nd"/>
</dbReference>
<dbReference type="NCBIfam" id="NF003069">
    <property type="entry name" value="PRK03992.1"/>
    <property type="match status" value="1"/>
</dbReference>
<dbReference type="NCBIfam" id="TIGR01242">
    <property type="entry name" value="proteasome-activating nucleotidase"/>
    <property type="match status" value="1"/>
</dbReference>
<dbReference type="PANTHER" id="PTHR23073">
    <property type="entry name" value="26S PROTEASOME REGULATORY SUBUNIT"/>
    <property type="match status" value="1"/>
</dbReference>
<dbReference type="Pfam" id="PF00004">
    <property type="entry name" value="AAA"/>
    <property type="match status" value="1"/>
</dbReference>
<dbReference type="Pfam" id="PF17862">
    <property type="entry name" value="AAA_lid_3"/>
    <property type="match status" value="1"/>
</dbReference>
<dbReference type="Pfam" id="PF16450">
    <property type="entry name" value="Prot_ATP_ID_OB_C"/>
    <property type="match status" value="1"/>
</dbReference>
<dbReference type="SMART" id="SM00382">
    <property type="entry name" value="AAA"/>
    <property type="match status" value="1"/>
</dbReference>
<dbReference type="SUPFAM" id="SSF52540">
    <property type="entry name" value="P-loop containing nucleoside triphosphate hydrolases"/>
    <property type="match status" value="1"/>
</dbReference>
<dbReference type="PROSITE" id="PS00674">
    <property type="entry name" value="AAA"/>
    <property type="match status" value="1"/>
</dbReference>
<gene>
    <name evidence="1" type="primary">pan</name>
    <name type="ordered locus">MmarC7_0920</name>
</gene>
<evidence type="ECO:0000255" key="1">
    <source>
        <dbReference type="HAMAP-Rule" id="MF_00553"/>
    </source>
</evidence>
<keyword id="KW-0067">ATP-binding</keyword>
<keyword id="KW-0143">Chaperone</keyword>
<keyword id="KW-0175">Coiled coil</keyword>
<keyword id="KW-0963">Cytoplasm</keyword>
<keyword id="KW-0547">Nucleotide-binding</keyword>
<keyword id="KW-0647">Proteasome</keyword>
<protein>
    <recommendedName>
        <fullName evidence="1">Proteasome-activating nucleotidase</fullName>
        <shortName evidence="1">PAN</shortName>
    </recommendedName>
    <alternativeName>
        <fullName evidence="1">Proteasomal ATPase</fullName>
    </alternativeName>
    <alternativeName>
        <fullName evidence="1">Proteasome regulatory ATPase</fullName>
    </alternativeName>
    <alternativeName>
        <fullName evidence="1">Proteasome regulatory particle</fullName>
    </alternativeName>
</protein>
<comment type="function">
    <text evidence="1">ATPase which is responsible for recognizing, binding, unfolding and translocation of substrate proteins into the archaeal 20S proteasome core particle. Is essential for opening the gate of the 20S proteasome via an interaction with its C-terminus, thereby allowing substrate entry and access to the site of proteolysis. Thus, the C-termini of the proteasomal ATPase function like a 'key in a lock' to induce gate opening and therefore regulate proteolysis. Unfolding activity requires energy from ATP hydrolysis, whereas ATP binding alone promotes ATPase-20S proteasome association which triggers gate opening, and supports translocation of unfolded substrates.</text>
</comment>
<comment type="subunit">
    <text evidence="1">Homohexamer. The hexameric complex has a two-ring architecture resembling a top hat that caps the 20S proteasome core at one or both ends. Upon ATP-binding, the C-terminus of PAN interacts with the alpha-rings of the proteasome core by binding to the intersubunit pockets.</text>
</comment>
<comment type="subcellular location">
    <subcellularLocation>
        <location evidence="1">Cytoplasm</location>
    </subcellularLocation>
</comment>
<comment type="domain">
    <text evidence="1">Consists of three main regions, an N-terminal coiled-coil domain that may assist in substrate recognition, an interdomain involved in PAN hexamerization, and a C-terminal ATPase domain of the AAA type.</text>
</comment>
<comment type="similarity">
    <text evidence="1">Belongs to the AAA ATPase family.</text>
</comment>
<sequence>MSYPDDYSTDIEKNKMDLKEFKEKTQIAELESKVLRLELKNKDVTRENVQIKKENEILKRELDKLRIPPLILGTILDKVNERKAVVKSSTGPNFLVNLSQFVDPEDIVPGARVCLNQQTLAIVEVLPKEKDYRAMAMEIEEKPDISFEDIGGLNNQIRDIKEVVELPLKNPELFEKVGIVPPKGVLLYGPPGTGKTLLAKAVAYETNASFVRVVGSELVKKFIGEGAKLVRDVFKLAKEKSPCIIFIDEIDAVASKRTESLTGGDREVQRTLMQLLAEMDGFDSRGDVKIIAATNRPDILDPAILRPGRFDRIIEISMPDEDGRLEILKIHTEKMNLKNVDLREVAKLAENMVGADLKAVCTEAGMFAIREEREFIKMDDFKEAISKITGKKEKCSYDMPQLTVMYG</sequence>
<feature type="chain" id="PRO_1000017923" description="Proteasome-activating nucleotidase">
    <location>
        <begin position="1"/>
        <end position="407"/>
    </location>
</feature>
<feature type="region of interest" description="Docks into pockets in the proteasome alpha-ring to cause gate opening" evidence="1">
    <location>
        <begin position="405"/>
        <end position="407"/>
    </location>
</feature>
<feature type="coiled-coil region" evidence="1">
    <location>
        <begin position="22"/>
        <end position="67"/>
    </location>
</feature>
<feature type="binding site" evidence="1">
    <location>
        <begin position="192"/>
        <end position="197"/>
    </location>
    <ligand>
        <name>ATP</name>
        <dbReference type="ChEBI" id="CHEBI:30616"/>
    </ligand>
</feature>
<feature type="binding site" evidence="1">
    <location>
        <position position="331"/>
    </location>
    <ligand>
        <name>ATP</name>
        <dbReference type="ChEBI" id="CHEBI:30616"/>
    </ligand>
</feature>
<reference key="1">
    <citation type="submission" date="2007-06" db="EMBL/GenBank/DDBJ databases">
        <title>Complete sequence of Methanococcus maripaludis C7.</title>
        <authorList>
            <consortium name="US DOE Joint Genome Institute"/>
            <person name="Copeland A."/>
            <person name="Lucas S."/>
            <person name="Lapidus A."/>
            <person name="Barry K."/>
            <person name="Glavina del Rio T."/>
            <person name="Dalin E."/>
            <person name="Tice H."/>
            <person name="Pitluck S."/>
            <person name="Clum A."/>
            <person name="Schmutz J."/>
            <person name="Larimer F."/>
            <person name="Land M."/>
            <person name="Hauser L."/>
            <person name="Kyrpides N."/>
            <person name="Anderson I."/>
            <person name="Sieprawska-Lupa M."/>
            <person name="Whitman W.B."/>
            <person name="Richardson P."/>
        </authorList>
    </citation>
    <scope>NUCLEOTIDE SEQUENCE [LARGE SCALE GENOMIC DNA]</scope>
    <source>
        <strain>C7 / ATCC BAA-1331</strain>
    </source>
</reference>
<name>PAN_METM7</name>
<proteinExistence type="inferred from homology"/>
<organism>
    <name type="scientific">Methanococcus maripaludis (strain C7 / ATCC BAA-1331)</name>
    <dbReference type="NCBI Taxonomy" id="426368"/>
    <lineage>
        <taxon>Archaea</taxon>
        <taxon>Methanobacteriati</taxon>
        <taxon>Methanobacteriota</taxon>
        <taxon>Methanomada group</taxon>
        <taxon>Methanococci</taxon>
        <taxon>Methanococcales</taxon>
        <taxon>Methanococcaceae</taxon>
        <taxon>Methanococcus</taxon>
    </lineage>
</organism>